<proteinExistence type="evidence at transcript level"/>
<organism>
    <name type="scientific">Bos taurus</name>
    <name type="common">Bovine</name>
    <dbReference type="NCBI Taxonomy" id="9913"/>
    <lineage>
        <taxon>Eukaryota</taxon>
        <taxon>Metazoa</taxon>
        <taxon>Chordata</taxon>
        <taxon>Craniata</taxon>
        <taxon>Vertebrata</taxon>
        <taxon>Euteleostomi</taxon>
        <taxon>Mammalia</taxon>
        <taxon>Eutheria</taxon>
        <taxon>Laurasiatheria</taxon>
        <taxon>Artiodactyla</taxon>
        <taxon>Ruminantia</taxon>
        <taxon>Pecora</taxon>
        <taxon>Bovidae</taxon>
        <taxon>Bovinae</taxon>
        <taxon>Bos</taxon>
    </lineage>
</organism>
<name>RIBC1_BOVIN</name>
<gene>
    <name type="primary">RIBC1</name>
</gene>
<protein>
    <recommendedName>
        <fullName>RIB43A-like with coiled-coils protein 1</fullName>
    </recommendedName>
</protein>
<sequence length="379" mass="44248">MYQVDLPPDPKEVAAIEARRNQEREQQSRFFNVRTRVMGVDVEALNNQVEERKLQEATERSKEAAYGTNQVRYDLVAQMLEKEQAERTRRLAKKVQNFREQRQKLRNRCELDFWNSNQLWREFPAYLGDNAPYYGQASLQCFSGEDLERATYLRMQQEQFQYSLERQLQEQQQARVDENCADMLNDQLRLAMDMRAAQLAKLEESCRIAMMAATASANKAQAVKLAEQQGQEHQRQQEANLVEVQNQITSDLLTENPQVAQNPVAPHRVLPYCWKGMTPEQRATIRKVQETQHHEKEAQRQAEQALDAKWESQAINLAQAAKELEEQERELCAEFRRGLGSFNQQLAMEQNAQQNYLNSIIYTNQPTAQYHLQFNTSSR</sequence>
<keyword id="KW-0966">Cell projection</keyword>
<keyword id="KW-0969">Cilium</keyword>
<keyword id="KW-0175">Coiled coil</keyword>
<keyword id="KW-0963">Cytoplasm</keyword>
<keyword id="KW-0206">Cytoskeleton</keyword>
<keyword id="KW-0282">Flagellum</keyword>
<keyword id="KW-1185">Reference proteome</keyword>
<dbReference type="EMBL" id="BC120408">
    <property type="protein sequence ID" value="AAI20409.1"/>
    <property type="molecule type" value="mRNA"/>
</dbReference>
<dbReference type="RefSeq" id="NP_001069053.1">
    <property type="nucleotide sequence ID" value="NM_001075585.1"/>
</dbReference>
<dbReference type="SMR" id="Q0VC09"/>
<dbReference type="FunCoup" id="Q0VC09">
    <property type="interactions" value="216"/>
</dbReference>
<dbReference type="STRING" id="9913.ENSBTAP00000074141"/>
<dbReference type="PaxDb" id="9913-ENSBTAP00000023625"/>
<dbReference type="GeneID" id="512894"/>
<dbReference type="KEGG" id="bta:512894"/>
<dbReference type="CTD" id="158787"/>
<dbReference type="eggNOG" id="ENOG502QWST">
    <property type="taxonomic scope" value="Eukaryota"/>
</dbReference>
<dbReference type="InParanoid" id="Q0VC09"/>
<dbReference type="OrthoDB" id="429119at2759"/>
<dbReference type="Proteomes" id="UP000009136">
    <property type="component" value="Unplaced"/>
</dbReference>
<dbReference type="GO" id="GO:0160111">
    <property type="term" value="C:axonemal A tubule inner sheath"/>
    <property type="evidence" value="ECO:0000250"/>
    <property type="project" value="UniProtKB"/>
</dbReference>
<dbReference type="GO" id="GO:0036126">
    <property type="term" value="C:sperm flagellum"/>
    <property type="evidence" value="ECO:0000250"/>
    <property type="project" value="UniProtKB"/>
</dbReference>
<dbReference type="GO" id="GO:0030317">
    <property type="term" value="P:flagellated sperm motility"/>
    <property type="evidence" value="ECO:0000250"/>
    <property type="project" value="UniProtKB"/>
</dbReference>
<dbReference type="InterPro" id="IPR008805">
    <property type="entry name" value="RIB43A"/>
</dbReference>
<dbReference type="PANTHER" id="PTHR14517:SF11">
    <property type="entry name" value="RIB43A-LIKE WITH COILED-COILS PROTEIN 1"/>
    <property type="match status" value="1"/>
</dbReference>
<dbReference type="PANTHER" id="PTHR14517">
    <property type="entry name" value="RIB43A-RELATED"/>
    <property type="match status" value="1"/>
</dbReference>
<dbReference type="Pfam" id="PF05914">
    <property type="entry name" value="RIB43A"/>
    <property type="match status" value="1"/>
</dbReference>
<comment type="subunit">
    <text evidence="1">Microtubule inner protein component of sperm flagellar doublet microtubules.</text>
</comment>
<comment type="subcellular location">
    <subcellularLocation>
        <location evidence="1">Cytoplasm</location>
        <location evidence="1">Cytoskeleton</location>
        <location evidence="1">Flagellum axoneme</location>
    </subcellularLocation>
</comment>
<comment type="similarity">
    <text evidence="3">Belongs to the RIB43A family.</text>
</comment>
<reference key="1">
    <citation type="submission" date="2006-08" db="EMBL/GenBank/DDBJ databases">
        <authorList>
            <consortium name="NIH - Mammalian Gene Collection (MGC) project"/>
        </authorList>
    </citation>
    <scope>NUCLEOTIDE SEQUENCE [LARGE SCALE MRNA]</scope>
    <source>
        <strain>Hereford</strain>
        <tissue>Basal ganglia</tissue>
    </source>
</reference>
<accession>Q0VC09</accession>
<feature type="chain" id="PRO_0000254092" description="RIB43A-like with coiled-coils protein 1">
    <location>
        <begin position="1"/>
        <end position="379"/>
    </location>
</feature>
<feature type="coiled-coil region" evidence="2">
    <location>
        <begin position="43"/>
        <end position="111"/>
    </location>
</feature>
<feature type="coiled-coil region" evidence="2">
    <location>
        <begin position="285"/>
        <end position="337"/>
    </location>
</feature>
<evidence type="ECO:0000250" key="1">
    <source>
        <dbReference type="UniProtKB" id="Q9D0B8"/>
    </source>
</evidence>
<evidence type="ECO:0000255" key="2"/>
<evidence type="ECO:0000305" key="3"/>